<protein>
    <recommendedName>
        <fullName>Putative ribosome maturation factor RimP</fullName>
    </recommendedName>
</protein>
<reference key="1">
    <citation type="journal article" date="2001" name="Nature">
        <title>Massive gene decay in the leprosy bacillus.</title>
        <authorList>
            <person name="Cole S.T."/>
            <person name="Eiglmeier K."/>
            <person name="Parkhill J."/>
            <person name="James K.D."/>
            <person name="Thomson N.R."/>
            <person name="Wheeler P.R."/>
            <person name="Honore N."/>
            <person name="Garnier T."/>
            <person name="Churcher C.M."/>
            <person name="Harris D.E."/>
            <person name="Mungall K.L."/>
            <person name="Basham D."/>
            <person name="Brown D."/>
            <person name="Chillingworth T."/>
            <person name="Connor R."/>
            <person name="Davies R.M."/>
            <person name="Devlin K."/>
            <person name="Duthoy S."/>
            <person name="Feltwell T."/>
            <person name="Fraser A."/>
            <person name="Hamlin N."/>
            <person name="Holroyd S."/>
            <person name="Hornsby T."/>
            <person name="Jagels K."/>
            <person name="Lacroix C."/>
            <person name="Maclean J."/>
            <person name="Moule S."/>
            <person name="Murphy L.D."/>
            <person name="Oliver K."/>
            <person name="Quail M.A."/>
            <person name="Rajandream M.A."/>
            <person name="Rutherford K.M."/>
            <person name="Rutter S."/>
            <person name="Seeger K."/>
            <person name="Simon S."/>
            <person name="Simmonds M."/>
            <person name="Skelton J."/>
            <person name="Squares R."/>
            <person name="Squares S."/>
            <person name="Stevens K."/>
            <person name="Taylor K."/>
            <person name="Whitehead S."/>
            <person name="Woodward J.R."/>
            <person name="Barrell B.G."/>
        </authorList>
    </citation>
    <scope>NUCLEOTIDE SEQUENCE [LARGE SCALE GENOMIC DNA]</scope>
    <source>
        <strain>TN</strain>
    </source>
</reference>
<keyword id="KW-0963">Cytoplasm</keyword>
<keyword id="KW-1185">Reference proteome</keyword>
<keyword id="KW-0690">Ribosome biogenesis</keyword>
<feature type="chain" id="PRO_0000181888" description="Putative ribosome maturation factor RimP">
    <location>
        <begin position="1"/>
        <end position="150"/>
    </location>
</feature>
<sequence>MNTGLPSQIQVIELLGGEVARAGYEVEDVIIHTWSQPFWITVLADGDTVLARDIIATLSHSVSALLDGLDNIVDRYFLEVSSLGMGRPFTSEKHFRRARGRKVELAAVGRIPADRSNWGDVRRHGDVGDPRRPRLCGMRDPAIEIMKAIV</sequence>
<comment type="function">
    <text evidence="1">Required for maturation of 30S ribosomal subunits.</text>
</comment>
<comment type="subcellular location">
    <subcellularLocation>
        <location evidence="1">Cytoplasm</location>
    </subcellularLocation>
</comment>
<comment type="similarity">
    <text evidence="1">Belongs to the RimP family.</text>
</comment>
<comment type="caution">
    <text evidence="2">Could be the product of a pseudogene.</text>
</comment>
<comment type="sequence caution" evidence="2">
    <conflict type="frameshift">
        <sequence resource="EMBL-CDS" id="CAB36567"/>
    </conflict>
</comment>
<evidence type="ECO:0000255" key="1">
    <source>
        <dbReference type="HAMAP-Rule" id="MF_01077"/>
    </source>
</evidence>
<evidence type="ECO:0000305" key="2"/>
<accession>Q9Z5J2</accession>
<gene>
    <name evidence="1" type="primary">rimP</name>
    <name type="ordered locus">ML1559</name>
    <name type="ORF">MLCB596.11</name>
</gene>
<proteinExistence type="uncertain"/>
<name>RIMP_MYCLE</name>
<organism>
    <name type="scientific">Mycobacterium leprae (strain TN)</name>
    <dbReference type="NCBI Taxonomy" id="272631"/>
    <lineage>
        <taxon>Bacteria</taxon>
        <taxon>Bacillati</taxon>
        <taxon>Actinomycetota</taxon>
        <taxon>Actinomycetes</taxon>
        <taxon>Mycobacteriales</taxon>
        <taxon>Mycobacteriaceae</taxon>
        <taxon>Mycobacterium</taxon>
    </lineage>
</organism>
<dbReference type="EMBL" id="AL035472">
    <property type="protein sequence ID" value="CAB36567.1"/>
    <property type="status" value="ALT_FRAME"/>
    <property type="molecule type" value="Genomic_DNA"/>
</dbReference>
<dbReference type="EMBL" id="AL583922">
    <property type="status" value="NOT_ANNOTATED_CDS"/>
    <property type="molecule type" value="Genomic_DNA"/>
</dbReference>
<dbReference type="SMR" id="Q9Z5J2"/>
<dbReference type="Leproma" id="ML1559"/>
<dbReference type="Proteomes" id="UP000000806">
    <property type="component" value="Chromosome"/>
</dbReference>
<dbReference type="GO" id="GO:0005829">
    <property type="term" value="C:cytosol"/>
    <property type="evidence" value="ECO:0007669"/>
    <property type="project" value="TreeGrafter"/>
</dbReference>
<dbReference type="GO" id="GO:0000028">
    <property type="term" value="P:ribosomal small subunit assembly"/>
    <property type="evidence" value="ECO:0007669"/>
    <property type="project" value="TreeGrafter"/>
</dbReference>
<dbReference type="GO" id="GO:0006412">
    <property type="term" value="P:translation"/>
    <property type="evidence" value="ECO:0007669"/>
    <property type="project" value="TreeGrafter"/>
</dbReference>
<dbReference type="Gene3D" id="3.30.300.70">
    <property type="entry name" value="RimP-like superfamily, N-terminal"/>
    <property type="match status" value="1"/>
</dbReference>
<dbReference type="HAMAP" id="MF_01077">
    <property type="entry name" value="RimP"/>
    <property type="match status" value="1"/>
</dbReference>
<dbReference type="InterPro" id="IPR003728">
    <property type="entry name" value="Ribosome_maturation_RimP"/>
</dbReference>
<dbReference type="InterPro" id="IPR028989">
    <property type="entry name" value="RimP_N"/>
</dbReference>
<dbReference type="InterPro" id="IPR035956">
    <property type="entry name" value="RimP_N_sf"/>
</dbReference>
<dbReference type="PANTHER" id="PTHR33867">
    <property type="entry name" value="RIBOSOME MATURATION FACTOR RIMP"/>
    <property type="match status" value="1"/>
</dbReference>
<dbReference type="PANTHER" id="PTHR33867:SF1">
    <property type="entry name" value="RIBOSOME MATURATION FACTOR RIMP"/>
    <property type="match status" value="1"/>
</dbReference>
<dbReference type="Pfam" id="PF02576">
    <property type="entry name" value="RimP_N"/>
    <property type="match status" value="1"/>
</dbReference>
<dbReference type="SUPFAM" id="SSF75420">
    <property type="entry name" value="YhbC-like, N-terminal domain"/>
    <property type="match status" value="1"/>
</dbReference>